<sequence>MVREKVKVSTRTLQWRCVESRRDSKRLYYGRFILSPLMKGQADTIGIAMRRALLGEIEGTCITRAKSENIPHDYSNIVGIQESVHEILMNLNEIVLRSNLYGTRNALICVQGPGYITARDIILPPSVEIVDNTQHIATVTESIDLCIGLKIERNRGYSLKMSNNFEDRSYPIDAVFMPVQNANHSIHSYGNGNGKQEILFLEIWTNGSLTPKEALHEASRNLINLFIPFLHVEEETFHLENNQHQVTLPLFPFHNRLVNLRKKKKELAFQYIFIDQLELPPRIYNCLKKSNIHTLLDLLNNSQEDLIKIEHFHIEDVKKILDILEKK</sequence>
<name>RPOA_DRANE</name>
<geneLocation type="chloroplast"/>
<comment type="function">
    <text evidence="1">DNA-dependent RNA polymerase catalyzes the transcription of DNA into RNA using the four ribonucleoside triphosphates as substrates.</text>
</comment>
<comment type="catalytic activity">
    <reaction evidence="1">
        <text>RNA(n) + a ribonucleoside 5'-triphosphate = RNA(n+1) + diphosphate</text>
        <dbReference type="Rhea" id="RHEA:21248"/>
        <dbReference type="Rhea" id="RHEA-COMP:14527"/>
        <dbReference type="Rhea" id="RHEA-COMP:17342"/>
        <dbReference type="ChEBI" id="CHEBI:33019"/>
        <dbReference type="ChEBI" id="CHEBI:61557"/>
        <dbReference type="ChEBI" id="CHEBI:140395"/>
        <dbReference type="EC" id="2.7.7.6"/>
    </reaction>
</comment>
<comment type="subunit">
    <text evidence="1">In plastids the minimal PEP RNA polymerase catalytic core is composed of four subunits: alpha, beta, beta', and beta''. When a (nuclear-encoded) sigma factor is associated with the core the holoenzyme is formed, which can initiate transcription.</text>
</comment>
<comment type="subcellular location">
    <subcellularLocation>
        <location>Plastid</location>
        <location>Chloroplast</location>
    </subcellularLocation>
</comment>
<comment type="domain">
    <text evidence="1">The N-terminal domain is essential for RNAP assembly and basal transcription, whereas the C-terminal domain is involved in interaction with transcriptional regulators and with upstream promoter elements.</text>
</comment>
<comment type="similarity">
    <text evidence="1">Belongs to the RNA polymerase alpha chain family.</text>
</comment>
<organism>
    <name type="scientific">Draba nemorosa</name>
    <name type="common">Woodland whitlowgrass</name>
    <dbReference type="NCBI Taxonomy" id="171822"/>
    <lineage>
        <taxon>Eukaryota</taxon>
        <taxon>Viridiplantae</taxon>
        <taxon>Streptophyta</taxon>
        <taxon>Embryophyta</taxon>
        <taxon>Tracheophyta</taxon>
        <taxon>Spermatophyta</taxon>
        <taxon>Magnoliopsida</taxon>
        <taxon>eudicotyledons</taxon>
        <taxon>Gunneridae</taxon>
        <taxon>Pentapetalae</taxon>
        <taxon>rosids</taxon>
        <taxon>malvids</taxon>
        <taxon>Brassicales</taxon>
        <taxon>Brassicaceae</taxon>
        <taxon>Arabideae</taxon>
        <taxon>Draba</taxon>
    </lineage>
</organism>
<dbReference type="EC" id="2.7.7.6" evidence="1"/>
<dbReference type="EMBL" id="AP009373">
    <property type="protein sequence ID" value="BAF50406.1"/>
    <property type="molecule type" value="Genomic_DNA"/>
</dbReference>
<dbReference type="RefSeq" id="YP_001123582.1">
    <property type="nucleotide sequence ID" value="NC_009272.1"/>
</dbReference>
<dbReference type="SMR" id="A4QL51"/>
<dbReference type="GeneID" id="4964752"/>
<dbReference type="GO" id="GO:0009507">
    <property type="term" value="C:chloroplast"/>
    <property type="evidence" value="ECO:0007669"/>
    <property type="project" value="UniProtKB-SubCell"/>
</dbReference>
<dbReference type="GO" id="GO:0000428">
    <property type="term" value="C:DNA-directed RNA polymerase complex"/>
    <property type="evidence" value="ECO:0007669"/>
    <property type="project" value="UniProtKB-KW"/>
</dbReference>
<dbReference type="GO" id="GO:0005739">
    <property type="term" value="C:mitochondrion"/>
    <property type="evidence" value="ECO:0007669"/>
    <property type="project" value="GOC"/>
</dbReference>
<dbReference type="GO" id="GO:0003677">
    <property type="term" value="F:DNA binding"/>
    <property type="evidence" value="ECO:0007669"/>
    <property type="project" value="UniProtKB-UniRule"/>
</dbReference>
<dbReference type="GO" id="GO:0003899">
    <property type="term" value="F:DNA-directed RNA polymerase activity"/>
    <property type="evidence" value="ECO:0007669"/>
    <property type="project" value="UniProtKB-UniRule"/>
</dbReference>
<dbReference type="GO" id="GO:0046983">
    <property type="term" value="F:protein dimerization activity"/>
    <property type="evidence" value="ECO:0007669"/>
    <property type="project" value="InterPro"/>
</dbReference>
<dbReference type="GO" id="GO:0006351">
    <property type="term" value="P:DNA-templated transcription"/>
    <property type="evidence" value="ECO:0007669"/>
    <property type="project" value="UniProtKB-UniRule"/>
</dbReference>
<dbReference type="CDD" id="cd06928">
    <property type="entry name" value="RNAP_alpha_NTD"/>
    <property type="match status" value="1"/>
</dbReference>
<dbReference type="FunFam" id="2.170.120.12:FF:000001">
    <property type="entry name" value="DNA-directed RNA polymerase subunit alpha"/>
    <property type="match status" value="1"/>
</dbReference>
<dbReference type="FunFam" id="3.30.1360.10:FF:000039">
    <property type="entry name" value="DNA-directed RNA polymerase subunit alpha"/>
    <property type="match status" value="1"/>
</dbReference>
<dbReference type="Gene3D" id="1.10.150.20">
    <property type="entry name" value="5' to 3' exonuclease, C-terminal subdomain"/>
    <property type="match status" value="1"/>
</dbReference>
<dbReference type="Gene3D" id="2.170.120.12">
    <property type="entry name" value="DNA-directed RNA polymerase, insert domain"/>
    <property type="match status" value="1"/>
</dbReference>
<dbReference type="Gene3D" id="3.30.1360.10">
    <property type="entry name" value="RNA polymerase, RBP11-like subunit"/>
    <property type="match status" value="1"/>
</dbReference>
<dbReference type="HAMAP" id="MF_00059">
    <property type="entry name" value="RNApol_bact_RpoA"/>
    <property type="match status" value="1"/>
</dbReference>
<dbReference type="InterPro" id="IPR011262">
    <property type="entry name" value="DNA-dir_RNA_pol_insert"/>
</dbReference>
<dbReference type="InterPro" id="IPR011263">
    <property type="entry name" value="DNA-dir_RNA_pol_RpoA/D/Rpb3"/>
</dbReference>
<dbReference type="InterPro" id="IPR011773">
    <property type="entry name" value="DNA-dir_RpoA"/>
</dbReference>
<dbReference type="InterPro" id="IPR036603">
    <property type="entry name" value="RBP11-like"/>
</dbReference>
<dbReference type="InterPro" id="IPR011260">
    <property type="entry name" value="RNAP_asu_C"/>
</dbReference>
<dbReference type="InterPro" id="IPR036643">
    <property type="entry name" value="RNApol_insert_sf"/>
</dbReference>
<dbReference type="NCBIfam" id="TIGR02027">
    <property type="entry name" value="rpoA"/>
    <property type="match status" value="1"/>
</dbReference>
<dbReference type="Pfam" id="PF01000">
    <property type="entry name" value="RNA_pol_A_bac"/>
    <property type="match status" value="1"/>
</dbReference>
<dbReference type="Pfam" id="PF03118">
    <property type="entry name" value="RNA_pol_A_CTD"/>
    <property type="match status" value="1"/>
</dbReference>
<dbReference type="Pfam" id="PF01193">
    <property type="entry name" value="RNA_pol_L"/>
    <property type="match status" value="1"/>
</dbReference>
<dbReference type="SMART" id="SM00662">
    <property type="entry name" value="RPOLD"/>
    <property type="match status" value="1"/>
</dbReference>
<dbReference type="SUPFAM" id="SSF47789">
    <property type="entry name" value="C-terminal domain of RNA polymerase alpha subunit"/>
    <property type="match status" value="1"/>
</dbReference>
<dbReference type="SUPFAM" id="SSF56553">
    <property type="entry name" value="Insert subdomain of RNA polymerase alpha subunit"/>
    <property type="match status" value="1"/>
</dbReference>
<dbReference type="SUPFAM" id="SSF55257">
    <property type="entry name" value="RBP11-like subunits of RNA polymerase"/>
    <property type="match status" value="1"/>
</dbReference>
<keyword id="KW-0150">Chloroplast</keyword>
<keyword id="KW-0240">DNA-directed RNA polymerase</keyword>
<keyword id="KW-0548">Nucleotidyltransferase</keyword>
<keyword id="KW-0934">Plastid</keyword>
<keyword id="KW-0804">Transcription</keyword>
<keyword id="KW-0808">Transferase</keyword>
<evidence type="ECO:0000255" key="1">
    <source>
        <dbReference type="HAMAP-Rule" id="MF_00059"/>
    </source>
</evidence>
<feature type="chain" id="PRO_0000296891" description="DNA-directed RNA polymerase subunit alpha">
    <location>
        <begin position="1"/>
        <end position="327"/>
    </location>
</feature>
<feature type="region of interest" description="Alpha N-terminal domain (alpha-NTD)" evidence="1">
    <location>
        <begin position="1"/>
        <end position="233"/>
    </location>
</feature>
<feature type="region of interest" description="Alpha C-terminal domain (alpha-CTD)" evidence="1">
    <location>
        <begin position="267"/>
        <end position="327"/>
    </location>
</feature>
<gene>
    <name evidence="1" type="primary">rpoA</name>
</gene>
<proteinExistence type="inferred from homology"/>
<protein>
    <recommendedName>
        <fullName evidence="1">DNA-directed RNA polymerase subunit alpha</fullName>
        <shortName evidence="1">PEP</shortName>
        <ecNumber evidence="1">2.7.7.6</ecNumber>
    </recommendedName>
    <alternativeName>
        <fullName evidence="1">Plastid-encoded RNA polymerase subunit alpha</fullName>
        <shortName evidence="1">RNA polymerase subunit alpha</shortName>
    </alternativeName>
</protein>
<accession>A4QL51</accession>
<reference key="1">
    <citation type="submission" date="2007-03" db="EMBL/GenBank/DDBJ databases">
        <title>Sequencing analysis of Draba nemoroza chloroplast DNA.</title>
        <authorList>
            <person name="Hosouchi T."/>
            <person name="Tsuruoka H."/>
            <person name="Kotani H."/>
        </authorList>
    </citation>
    <scope>NUCLEOTIDE SEQUENCE [LARGE SCALE GENOMIC DNA]</scope>
</reference>